<reference key="1">
    <citation type="submission" date="2003-03" db="EMBL/GenBank/DDBJ databases">
        <title>African swine fever virus genomes.</title>
        <authorList>
            <person name="Kutish G.F."/>
            <person name="Rock D.L."/>
        </authorList>
    </citation>
    <scope>NUCLEOTIDE SEQUENCE [LARGE SCALE GENOMIC DNA]</scope>
</reference>
<keyword id="KW-0426">Late protein</keyword>
<keyword id="KW-0946">Virion</keyword>
<sequence>MYHDYASKLLADYRSDPPLWESDLPRHNRYSDNILNSRYCGNKNGAAPVYNEYTNSPGKAEKGLQLSDLRNFSFMLNPQHKNIGYGDAQDLEPYSSIPKNKLFNHFKNYRPAFSTHTENLIKRNVVRTEKKTFPQVSGLKDTQKNCLTQPSSLPSLKNPKNSSVPSTRFSEHTKFFSYEDLPKLRTKGTIKHEQHLGDQMPGQYYNGYIPHQDVYNILCLAHKLPASVEKEIAGRGIPLGNPHVKPNIEQELIKSTSTYTGVPMLGPLPPKDSQHGREYQEFSANRHMLQVSNILHSVFANHSIKPQILEDIPVLNAQLASIKPVSPFLNKAYQTHYMENIVTLVPRFKSIANYSSPIPNYSKRNNGQAEYFDTSKQTISRHNNYIPKYTGGIGDSRLDSTFPKDFNASSVPLTSAEKDHSLRGDNSACCISSISPSL</sequence>
<accession>P0C9Z5</accession>
<feature type="chain" id="PRO_0000373411" description="Minor capsid protein p49">
    <location>
        <begin position="1"/>
        <end position="438"/>
    </location>
</feature>
<feature type="region of interest" description="Disordered" evidence="2">
    <location>
        <begin position="134"/>
        <end position="167"/>
    </location>
</feature>
<feature type="compositionally biased region" description="Polar residues" evidence="2">
    <location>
        <begin position="144"/>
        <end position="167"/>
    </location>
</feature>
<comment type="function">
    <text evidence="1">Together with the penton and the other minor capsid proteins (M1249L, p17), forms a complicated network immediately below the outer capsid shell, stabilizing the whole capsid (By similarity). Plays an essential role in the formation of infectious virus particles. Especially required for the formation of the capsid vertices (By similarity). During virion assembly, associates with the membrane and probably mediates the docking of the penton complex to the inner membrane, where it recruits the capsomers to form the penton core (By similarity).</text>
</comment>
<comment type="subcellular location">
    <subcellularLocation>
        <location evidence="1">Virion</location>
    </subcellularLocation>
    <text evidence="1">Localizes in close proximity to the capsid vertices.</text>
</comment>
<comment type="induction">
    <text evidence="3">Expressed in the late phase of the viral replicative cycle.</text>
</comment>
<comment type="similarity">
    <text evidence="3">Belongs to the asfivirus p49 structural protein family.</text>
</comment>
<organismHost>
    <name type="scientific">Ornithodoros</name>
    <name type="common">relapsing fever ticks</name>
    <dbReference type="NCBI Taxonomy" id="6937"/>
</organismHost>
<organismHost>
    <name type="scientific">Phacochoerus aethiopicus</name>
    <name type="common">Warthog</name>
    <dbReference type="NCBI Taxonomy" id="85517"/>
</organismHost>
<organismHost>
    <name type="scientific">Phacochoerus africanus</name>
    <name type="common">Warthog</name>
    <dbReference type="NCBI Taxonomy" id="41426"/>
</organismHost>
<organismHost>
    <name type="scientific">Potamochoerus larvatus</name>
    <name type="common">Bushpig</name>
    <dbReference type="NCBI Taxonomy" id="273792"/>
</organismHost>
<organismHost>
    <name type="scientific">Sus scrofa</name>
    <name type="common">Pig</name>
    <dbReference type="NCBI Taxonomy" id="9823"/>
</organismHost>
<protein>
    <recommendedName>
        <fullName evidence="1">Minor capsid protein p49</fullName>
        <shortName>p49</shortName>
    </recommendedName>
</protein>
<dbReference type="EMBL" id="AY261366">
    <property type="status" value="NOT_ANNOTATED_CDS"/>
    <property type="molecule type" value="Genomic_DNA"/>
</dbReference>
<dbReference type="Proteomes" id="UP000000858">
    <property type="component" value="Segment"/>
</dbReference>
<dbReference type="GO" id="GO:0044423">
    <property type="term" value="C:virion component"/>
    <property type="evidence" value="ECO:0007669"/>
    <property type="project" value="UniProtKB-KW"/>
</dbReference>
<name>P49_ASFWA</name>
<organism>
    <name type="scientific">African swine fever virus (isolate Warthog/Namibia/Wart80/1980)</name>
    <name type="common">ASFV</name>
    <dbReference type="NCBI Taxonomy" id="561444"/>
    <lineage>
        <taxon>Viruses</taxon>
        <taxon>Varidnaviria</taxon>
        <taxon>Bamfordvirae</taxon>
        <taxon>Nucleocytoviricota</taxon>
        <taxon>Pokkesviricetes</taxon>
        <taxon>Asfuvirales</taxon>
        <taxon>Asfarviridae</taxon>
        <taxon>Asfivirus</taxon>
        <taxon>African swine fever virus</taxon>
    </lineage>
</organism>
<evidence type="ECO:0000250" key="1">
    <source>
        <dbReference type="UniProtKB" id="Q65165"/>
    </source>
</evidence>
<evidence type="ECO:0000256" key="2">
    <source>
        <dbReference type="SAM" id="MobiDB-lite"/>
    </source>
</evidence>
<evidence type="ECO:0000305" key="3"/>
<proteinExistence type="inferred from homology"/>
<gene>
    <name type="ordered locus">War-085</name>
</gene>